<gene>
    <name type="primary">Ins2</name>
    <name type="synonym">Ins-2</name>
</gene>
<organism>
    <name type="scientific">Mus musculus</name>
    <name type="common">Mouse</name>
    <dbReference type="NCBI Taxonomy" id="10090"/>
    <lineage>
        <taxon>Eukaryota</taxon>
        <taxon>Metazoa</taxon>
        <taxon>Chordata</taxon>
        <taxon>Craniata</taxon>
        <taxon>Vertebrata</taxon>
        <taxon>Euteleostomi</taxon>
        <taxon>Mammalia</taxon>
        <taxon>Eutheria</taxon>
        <taxon>Euarchontoglires</taxon>
        <taxon>Glires</taxon>
        <taxon>Rodentia</taxon>
        <taxon>Myomorpha</taxon>
        <taxon>Muroidea</taxon>
        <taxon>Muridae</taxon>
        <taxon>Murinae</taxon>
        <taxon>Mus</taxon>
        <taxon>Mus</taxon>
    </lineage>
</organism>
<dbReference type="EMBL" id="X04724">
    <property type="protein sequence ID" value="CAA28433.1"/>
    <property type="molecule type" value="Genomic_DNA"/>
</dbReference>
<dbReference type="CCDS" id="CCDS22034.1"/>
<dbReference type="PIR" id="A26342">
    <property type="entry name" value="INMS2"/>
</dbReference>
<dbReference type="RefSeq" id="NP_001172012.1">
    <property type="nucleotide sequence ID" value="NM_001185083.2"/>
</dbReference>
<dbReference type="RefSeq" id="NP_001172013.1">
    <property type="nucleotide sequence ID" value="NM_001185084.2"/>
</dbReference>
<dbReference type="RefSeq" id="NP_032413.1">
    <property type="nucleotide sequence ID" value="NM_008387.5"/>
</dbReference>
<dbReference type="SMR" id="P01326"/>
<dbReference type="FunCoup" id="P01326">
    <property type="interactions" value="1266"/>
</dbReference>
<dbReference type="STRING" id="10090.ENSMUSP00000147425"/>
<dbReference type="iPTMnet" id="P01326"/>
<dbReference type="PhosphoSitePlus" id="P01326"/>
<dbReference type="PaxDb" id="10090-ENSMUSP00000101553"/>
<dbReference type="ProteomicsDB" id="269317"/>
<dbReference type="ABCD" id="P01326">
    <property type="antibodies" value="1 sequenced antibody"/>
</dbReference>
<dbReference type="DNASU" id="16334"/>
<dbReference type="Ensembl" id="ENSMUST00000000220.3">
    <property type="protein sequence ID" value="ENSMUSP00000000220.3"/>
    <property type="gene ID" value="ENSMUSG00000000215.12"/>
</dbReference>
<dbReference type="Ensembl" id="ENSMUST00000105932.2">
    <property type="protein sequence ID" value="ENSMUSP00000101552.2"/>
    <property type="gene ID" value="ENSMUSG00000000215.12"/>
</dbReference>
<dbReference type="Ensembl" id="ENSMUST00000105933.8">
    <property type="protein sequence ID" value="ENSMUSP00000101553.2"/>
    <property type="gene ID" value="ENSMUSG00000000215.12"/>
</dbReference>
<dbReference type="Ensembl" id="ENSMUST00000105934.8">
    <property type="protein sequence ID" value="ENSMUSP00000101554.2"/>
    <property type="gene ID" value="ENSMUSG00000000215.12"/>
</dbReference>
<dbReference type="Ensembl" id="ENSMUST00000210288.2">
    <property type="protein sequence ID" value="ENSMUSP00000147425.2"/>
    <property type="gene ID" value="ENSMUSG00000000215.12"/>
</dbReference>
<dbReference type="GeneID" id="16334"/>
<dbReference type="KEGG" id="mmu:16334"/>
<dbReference type="UCSC" id="uc009kof.2">
    <property type="organism name" value="mouse"/>
</dbReference>
<dbReference type="AGR" id="MGI:96573"/>
<dbReference type="CTD" id="16334"/>
<dbReference type="MGI" id="MGI:96573">
    <property type="gene designation" value="Ins2"/>
</dbReference>
<dbReference type="VEuPathDB" id="HostDB:ENSMUSG00000000215"/>
<dbReference type="eggNOG" id="ENOG502S5P5">
    <property type="taxonomic scope" value="Eukaryota"/>
</dbReference>
<dbReference type="GeneTree" id="ENSGT00390000015440"/>
<dbReference type="InParanoid" id="P01326"/>
<dbReference type="OMA" id="LANQHLC"/>
<dbReference type="OrthoDB" id="10019596at2759"/>
<dbReference type="PhylomeDB" id="P01326"/>
<dbReference type="TreeFam" id="TF332820"/>
<dbReference type="BioGRID-ORCS" id="16334">
    <property type="hits" value="3 hits in 78 CRISPR screens"/>
</dbReference>
<dbReference type="ChiTaRS" id="Ins2">
    <property type="organism name" value="mouse"/>
</dbReference>
<dbReference type="PRO" id="PR:P01326"/>
<dbReference type="Proteomes" id="UP000000589">
    <property type="component" value="Chromosome 7"/>
</dbReference>
<dbReference type="RNAct" id="P01326">
    <property type="molecule type" value="protein"/>
</dbReference>
<dbReference type="Bgee" id="ENSMUSG00000000215">
    <property type="expression patterns" value="Expressed in islet of Langerhans and 59 other cell types or tissues"/>
</dbReference>
<dbReference type="ExpressionAtlas" id="P01326">
    <property type="expression patterns" value="baseline and differential"/>
</dbReference>
<dbReference type="GO" id="GO:0062023">
    <property type="term" value="C:collagen-containing extracellular matrix"/>
    <property type="evidence" value="ECO:0007005"/>
    <property type="project" value="BHF-UCL"/>
</dbReference>
<dbReference type="GO" id="GO:0005737">
    <property type="term" value="C:cytoplasm"/>
    <property type="evidence" value="ECO:0000314"/>
    <property type="project" value="MGI"/>
</dbReference>
<dbReference type="GO" id="GO:0005829">
    <property type="term" value="C:cytosol"/>
    <property type="evidence" value="ECO:0000314"/>
    <property type="project" value="MGI"/>
</dbReference>
<dbReference type="GO" id="GO:0005788">
    <property type="term" value="C:endoplasmic reticulum lumen"/>
    <property type="evidence" value="ECO:0000304"/>
    <property type="project" value="Reactome"/>
</dbReference>
<dbReference type="GO" id="GO:0005576">
    <property type="term" value="C:extracellular region"/>
    <property type="evidence" value="ECO:0000304"/>
    <property type="project" value="Reactome"/>
</dbReference>
<dbReference type="GO" id="GO:0005615">
    <property type="term" value="C:extracellular space"/>
    <property type="evidence" value="ECO:0000314"/>
    <property type="project" value="MGI"/>
</dbReference>
<dbReference type="GO" id="GO:0005634">
    <property type="term" value="C:nucleus"/>
    <property type="evidence" value="ECO:0000314"/>
    <property type="project" value="MGI"/>
</dbReference>
<dbReference type="GO" id="GO:0030141">
    <property type="term" value="C:secretory granule"/>
    <property type="evidence" value="ECO:0000314"/>
    <property type="project" value="MGI"/>
</dbReference>
<dbReference type="GO" id="GO:0034774">
    <property type="term" value="C:secretory granule lumen"/>
    <property type="evidence" value="ECO:0000304"/>
    <property type="project" value="Reactome"/>
</dbReference>
<dbReference type="GO" id="GO:0005732">
    <property type="term" value="C:sno(s)RNA-containing ribonucleoprotein complex"/>
    <property type="evidence" value="ECO:0000314"/>
    <property type="project" value="MGI"/>
</dbReference>
<dbReference type="GO" id="GO:0005179">
    <property type="term" value="F:hormone activity"/>
    <property type="evidence" value="ECO:0007669"/>
    <property type="project" value="UniProtKB-KW"/>
</dbReference>
<dbReference type="GO" id="GO:0048018">
    <property type="term" value="F:receptor ligand activity"/>
    <property type="evidence" value="ECO:0000266"/>
    <property type="project" value="MGI"/>
</dbReference>
<dbReference type="GO" id="GO:0030297">
    <property type="term" value="F:transmembrane receptor protein tyrosine kinase activator activity"/>
    <property type="evidence" value="ECO:0000266"/>
    <property type="project" value="MGI"/>
</dbReference>
<dbReference type="GO" id="GO:0008270">
    <property type="term" value="F:zinc ion binding"/>
    <property type="evidence" value="ECO:0000316"/>
    <property type="project" value="MGI"/>
</dbReference>
<dbReference type="GO" id="GO:1904659">
    <property type="term" value="P:D-glucose transmembrane transport"/>
    <property type="evidence" value="ECO:0000304"/>
    <property type="project" value="MGI"/>
</dbReference>
<dbReference type="GO" id="GO:0006983">
    <property type="term" value="P:ER overload response"/>
    <property type="evidence" value="ECO:0000315"/>
    <property type="project" value="MGI"/>
</dbReference>
<dbReference type="GO" id="GO:0042593">
    <property type="term" value="P:glucose homeostasis"/>
    <property type="evidence" value="ECO:0000315"/>
    <property type="project" value="MGI"/>
</dbReference>
<dbReference type="GO" id="GO:0006006">
    <property type="term" value="P:glucose metabolic process"/>
    <property type="evidence" value="ECO:0000315"/>
    <property type="project" value="MGI"/>
</dbReference>
<dbReference type="GO" id="GO:0030070">
    <property type="term" value="P:insulin processing"/>
    <property type="evidence" value="ECO:0000316"/>
    <property type="project" value="MGI"/>
</dbReference>
<dbReference type="GO" id="GO:0008286">
    <property type="term" value="P:insulin receptor signaling pathway"/>
    <property type="evidence" value="ECO:0000314"/>
    <property type="project" value="MGI"/>
</dbReference>
<dbReference type="GO" id="GO:0070059">
    <property type="term" value="P:intrinsic apoptotic signaling pathway in response to endoplasmic reticulum stress"/>
    <property type="evidence" value="ECO:0000315"/>
    <property type="project" value="MGI"/>
</dbReference>
<dbReference type="GO" id="GO:0016042">
    <property type="term" value="P:lipid catabolic process"/>
    <property type="evidence" value="ECO:0000314"/>
    <property type="project" value="MGI"/>
</dbReference>
<dbReference type="GO" id="GO:0007520">
    <property type="term" value="P:myoblast fusion"/>
    <property type="evidence" value="ECO:0000316"/>
    <property type="project" value="MGI"/>
</dbReference>
<dbReference type="GO" id="GO:0014902">
    <property type="term" value="P:myotube differentiation"/>
    <property type="evidence" value="ECO:0000316"/>
    <property type="project" value="MGI"/>
</dbReference>
<dbReference type="GO" id="GO:0000122">
    <property type="term" value="P:negative regulation of transcription by RNA polymerase II"/>
    <property type="evidence" value="ECO:0000314"/>
    <property type="project" value="MGI"/>
</dbReference>
<dbReference type="GO" id="GO:0070374">
    <property type="term" value="P:positive regulation of ERK1 and ERK2 cascade"/>
    <property type="evidence" value="ECO:0000314"/>
    <property type="project" value="MGI"/>
</dbReference>
<dbReference type="GO" id="GO:0051897">
    <property type="term" value="P:positive regulation of phosphatidylinositol 3-kinase/protein kinase B signal transduction"/>
    <property type="evidence" value="ECO:0000314"/>
    <property type="project" value="MGI"/>
</dbReference>
<dbReference type="GO" id="GO:0031623">
    <property type="term" value="P:receptor internalization"/>
    <property type="evidence" value="ECO:0000314"/>
    <property type="project" value="MGI"/>
</dbReference>
<dbReference type="GO" id="GO:0010468">
    <property type="term" value="P:regulation of gene expression"/>
    <property type="evidence" value="ECO:0000314"/>
    <property type="project" value="MGI"/>
</dbReference>
<dbReference type="CDD" id="cd04367">
    <property type="entry name" value="IlGF_insulin_like"/>
    <property type="match status" value="1"/>
</dbReference>
<dbReference type="FunFam" id="1.10.100.10:FF:000003">
    <property type="entry name" value="Insulin"/>
    <property type="match status" value="1"/>
</dbReference>
<dbReference type="Gene3D" id="1.10.100.10">
    <property type="entry name" value="Insulin-like"/>
    <property type="match status" value="1"/>
</dbReference>
<dbReference type="InterPro" id="IPR004825">
    <property type="entry name" value="Insulin"/>
</dbReference>
<dbReference type="InterPro" id="IPR016179">
    <property type="entry name" value="Insulin-like"/>
</dbReference>
<dbReference type="InterPro" id="IPR036438">
    <property type="entry name" value="Insulin-like_sf"/>
</dbReference>
<dbReference type="InterPro" id="IPR022353">
    <property type="entry name" value="Insulin_CS"/>
</dbReference>
<dbReference type="InterPro" id="IPR022352">
    <property type="entry name" value="Insulin_family"/>
</dbReference>
<dbReference type="PANTHER" id="PTHR11454:SF33">
    <property type="entry name" value="INSULIN-2"/>
    <property type="match status" value="1"/>
</dbReference>
<dbReference type="PANTHER" id="PTHR11454">
    <property type="entry name" value="INSULIN/INSULIN GROWTH FACTOR"/>
    <property type="match status" value="1"/>
</dbReference>
<dbReference type="Pfam" id="PF00049">
    <property type="entry name" value="Insulin"/>
    <property type="match status" value="1"/>
</dbReference>
<dbReference type="PRINTS" id="PR00277">
    <property type="entry name" value="INSULIN"/>
</dbReference>
<dbReference type="PRINTS" id="PR00276">
    <property type="entry name" value="INSULINFAMLY"/>
</dbReference>
<dbReference type="SMART" id="SM00078">
    <property type="entry name" value="IlGF"/>
    <property type="match status" value="1"/>
</dbReference>
<dbReference type="SUPFAM" id="SSF56994">
    <property type="entry name" value="Insulin-like"/>
    <property type="match status" value="1"/>
</dbReference>
<dbReference type="PROSITE" id="PS00262">
    <property type="entry name" value="INSULIN"/>
    <property type="match status" value="1"/>
</dbReference>
<accession>P01326</accession>
<sequence>MALWMRFLPLLALLFLWESHPTQAFVKQHLCGSHLVEALYLVCGERGFFYTPMSRREVEDPQVAQLELGGGPGAGDLQTLALEVAQQKRGIVDQCCTSICSLYQLENYCN</sequence>
<evidence type="ECO:0000250" key="1">
    <source>
        <dbReference type="UniProtKB" id="P01308"/>
    </source>
</evidence>
<evidence type="ECO:0000269" key="2">
    <source>
    </source>
</evidence>
<evidence type="ECO:0000269" key="3">
    <source>
    </source>
</evidence>
<evidence type="ECO:0000305" key="4"/>
<reference key="1">
    <citation type="journal article" date="1986" name="J. Mol. Evol.">
        <title>Characterization of the two nonallelic genes encoding mouse preproinsulin.</title>
        <authorList>
            <person name="Wentworth B.M."/>
            <person name="Schaefer I.M."/>
            <person name="Villa-Komaroff L."/>
            <person name="Chirgwin J.M."/>
        </authorList>
    </citation>
    <scope>NUCLEOTIDE SEQUENCE [GENOMIC DNA]</scope>
</reference>
<reference key="2">
    <citation type="journal article" date="1990" name="J. Mol. Endocrinol.">
        <title>Molecular cloning and DNA sequence analysis of preproinsulin genes in the NON mouse, an animal model of human non-obese, non-insulin-dependent diabetes mellitus.</title>
        <authorList>
            <person name="Sawa T."/>
            <person name="Ohgaku S."/>
            <person name="Morioka H."/>
            <person name="Yano S."/>
        </authorList>
    </citation>
    <scope>NUCLEOTIDE SEQUENCE [GENOMIC DNA]</scope>
    <source>
        <strain>NON</strain>
    </source>
</reference>
<reference key="3">
    <citation type="journal article" date="1972" name="Hoppe-Seyler's Z. Physiol. Chem.">
        <title>Amino acid sequence of the two insulins from mouse (Maus musculus).</title>
        <authorList>
            <person name="Buenzli H.F."/>
            <person name="Glatthaar B."/>
            <person name="Kunz P."/>
            <person name="Muelhaupt E."/>
            <person name="Humbel R.E."/>
        </authorList>
    </citation>
    <scope>PROTEIN SEQUENCE OF 25-54 AND 90-110</scope>
</reference>
<reference key="4">
    <citation type="journal article" date="2010" name="Cell">
        <title>A tissue-specific atlas of mouse protein phosphorylation and expression.</title>
        <authorList>
            <person name="Huttlin E.L."/>
            <person name="Jedrychowski M.P."/>
            <person name="Elias J.E."/>
            <person name="Goswami T."/>
            <person name="Rad R."/>
            <person name="Beausoleil S.A."/>
            <person name="Villen J."/>
            <person name="Haas W."/>
            <person name="Sowa M.E."/>
            <person name="Gygi S.P."/>
        </authorList>
    </citation>
    <scope>IDENTIFICATION BY MASS SPECTROMETRY [LARGE SCALE ANALYSIS]</scope>
    <source>
        <tissue>Pancreas</tissue>
    </source>
</reference>
<proteinExistence type="evidence at protein level"/>
<comment type="function">
    <text>Insulin decreases blood glucose concentration. It increases cell permeability to monosaccharides, amino acids and fatty acids. It accelerates glycolysis, the pentose phosphate cycle, and glycogen synthesis in liver.</text>
</comment>
<comment type="subunit">
    <text evidence="1">Heterodimer of a B chain and an A chain linked by two disulfide bonds.</text>
</comment>
<comment type="subcellular location">
    <subcellularLocation>
        <location>Secreted</location>
    </subcellularLocation>
</comment>
<comment type="similarity">
    <text evidence="4">Belongs to the insulin family.</text>
</comment>
<protein>
    <recommendedName>
        <fullName>Insulin-2</fullName>
    </recommendedName>
    <component>
        <recommendedName>
            <fullName>Insulin-2 B chain</fullName>
        </recommendedName>
    </component>
    <component>
        <recommendedName>
            <fullName>Insulin-2 A chain</fullName>
        </recommendedName>
    </component>
</protein>
<keyword id="KW-0119">Carbohydrate metabolism</keyword>
<keyword id="KW-0165">Cleavage on pair of basic residues</keyword>
<keyword id="KW-0903">Direct protein sequencing</keyword>
<keyword id="KW-1015">Disulfide bond</keyword>
<keyword id="KW-0313">Glucose metabolism</keyword>
<keyword id="KW-0372">Hormone</keyword>
<keyword id="KW-1185">Reference proteome</keyword>
<keyword id="KW-0964">Secreted</keyword>
<keyword id="KW-0732">Signal</keyword>
<name>INS2_MOUSE</name>
<feature type="signal peptide" evidence="3">
    <location>
        <begin position="1"/>
        <end position="24"/>
    </location>
</feature>
<feature type="peptide" id="PRO_0000015845" description="Insulin-2 B chain" evidence="2">
    <location>
        <begin position="25"/>
        <end position="54"/>
    </location>
</feature>
<feature type="propeptide" id="PRO_0000015846" description="C peptide">
    <location>
        <begin position="57"/>
        <end position="87"/>
    </location>
</feature>
<feature type="peptide" id="PRO_0000015847" description="Insulin-2 A chain" evidence="2">
    <location>
        <begin position="90"/>
        <end position="110"/>
    </location>
</feature>
<feature type="disulfide bond" description="Interchain (between B and A chains)" evidence="1">
    <location>
        <begin position="31"/>
        <end position="96"/>
    </location>
</feature>
<feature type="disulfide bond" description="Interchain (between B and A chains)" evidence="1">
    <location>
        <begin position="43"/>
        <end position="109"/>
    </location>
</feature>
<feature type="disulfide bond" evidence="1">
    <location>
        <begin position="95"/>
        <end position="100"/>
    </location>
</feature>